<organism>
    <name type="scientific">Brevibacillus brevis (strain 47 / JCM 6285 / NBRC 100599)</name>
    <dbReference type="NCBI Taxonomy" id="358681"/>
    <lineage>
        <taxon>Bacteria</taxon>
        <taxon>Bacillati</taxon>
        <taxon>Bacillota</taxon>
        <taxon>Bacilli</taxon>
        <taxon>Bacillales</taxon>
        <taxon>Paenibacillaceae</taxon>
        <taxon>Brevibacillus</taxon>
    </lineage>
</organism>
<protein>
    <recommendedName>
        <fullName evidence="1">RNA-binding protein Hfq</fullName>
    </recommendedName>
</protein>
<sequence length="79" mass="9188">MKQTINIQDTFLNHLRKENIAVTIYLVNGFQLRGYIKAFDNFTIVIDSEGKQQLVYKHAISTFTPQRPVSLMSQENNQQ</sequence>
<proteinExistence type="inferred from homology"/>
<comment type="function">
    <text evidence="1">RNA chaperone that binds small regulatory RNA (sRNAs) and mRNAs to facilitate mRNA translational regulation in response to envelope stress, environmental stress and changes in metabolite concentrations. Also binds with high specificity to tRNAs.</text>
</comment>
<comment type="subunit">
    <text evidence="1">Homohexamer.</text>
</comment>
<comment type="similarity">
    <text evidence="1">Belongs to the Hfq family.</text>
</comment>
<feature type="chain" id="PRO_1000135021" description="RNA-binding protein Hfq">
    <location>
        <begin position="1"/>
        <end position="79"/>
    </location>
</feature>
<feature type="domain" description="Sm" evidence="2">
    <location>
        <begin position="9"/>
        <end position="69"/>
    </location>
</feature>
<reference key="1">
    <citation type="submission" date="2005-03" db="EMBL/GenBank/DDBJ databases">
        <title>Brevibacillus brevis strain 47, complete genome.</title>
        <authorList>
            <person name="Hosoyama A."/>
            <person name="Yamada R."/>
            <person name="Hongo Y."/>
            <person name="Terui Y."/>
            <person name="Ankai A."/>
            <person name="Masuyama W."/>
            <person name="Sekiguchi M."/>
            <person name="Takeda T."/>
            <person name="Asano K."/>
            <person name="Ohji S."/>
            <person name="Ichikawa N."/>
            <person name="Narita S."/>
            <person name="Aoki N."/>
            <person name="Miura H."/>
            <person name="Matsushita S."/>
            <person name="Sekigawa T."/>
            <person name="Yamagata H."/>
            <person name="Yoshikawa H."/>
            <person name="Udaka S."/>
            <person name="Tanikawa S."/>
            <person name="Fujita N."/>
        </authorList>
    </citation>
    <scope>NUCLEOTIDE SEQUENCE [LARGE SCALE GENOMIC DNA]</scope>
    <source>
        <strain>47 / JCM 6285 / NBRC 100599</strain>
    </source>
</reference>
<evidence type="ECO:0000255" key="1">
    <source>
        <dbReference type="HAMAP-Rule" id="MF_00436"/>
    </source>
</evidence>
<evidence type="ECO:0000255" key="2">
    <source>
        <dbReference type="PROSITE-ProRule" id="PRU01346"/>
    </source>
</evidence>
<keyword id="KW-1185">Reference proteome</keyword>
<keyword id="KW-0694">RNA-binding</keyword>
<keyword id="KW-0346">Stress response</keyword>
<gene>
    <name evidence="1" type="primary">hfq</name>
    <name type="ordered locus">BBR47_33680</name>
</gene>
<dbReference type="EMBL" id="AP008955">
    <property type="protein sequence ID" value="BAH44345.1"/>
    <property type="molecule type" value="Genomic_DNA"/>
</dbReference>
<dbReference type="RefSeq" id="WP_007719110.1">
    <property type="nucleotide sequence ID" value="NC_012491.1"/>
</dbReference>
<dbReference type="SMR" id="C0ZEY6"/>
<dbReference type="STRING" id="358681.BBR47_33680"/>
<dbReference type="GeneID" id="95750329"/>
<dbReference type="KEGG" id="bbe:BBR47_33680"/>
<dbReference type="eggNOG" id="COG1923">
    <property type="taxonomic scope" value="Bacteria"/>
</dbReference>
<dbReference type="HOGENOM" id="CLU_113688_3_0_9"/>
<dbReference type="Proteomes" id="UP000001877">
    <property type="component" value="Chromosome"/>
</dbReference>
<dbReference type="GO" id="GO:0005829">
    <property type="term" value="C:cytosol"/>
    <property type="evidence" value="ECO:0007669"/>
    <property type="project" value="TreeGrafter"/>
</dbReference>
<dbReference type="GO" id="GO:0003723">
    <property type="term" value="F:RNA binding"/>
    <property type="evidence" value="ECO:0007669"/>
    <property type="project" value="UniProtKB-UniRule"/>
</dbReference>
<dbReference type="GO" id="GO:0006355">
    <property type="term" value="P:regulation of DNA-templated transcription"/>
    <property type="evidence" value="ECO:0007669"/>
    <property type="project" value="InterPro"/>
</dbReference>
<dbReference type="GO" id="GO:0043487">
    <property type="term" value="P:regulation of RNA stability"/>
    <property type="evidence" value="ECO:0007669"/>
    <property type="project" value="TreeGrafter"/>
</dbReference>
<dbReference type="GO" id="GO:0045974">
    <property type="term" value="P:regulation of translation, ncRNA-mediated"/>
    <property type="evidence" value="ECO:0007669"/>
    <property type="project" value="TreeGrafter"/>
</dbReference>
<dbReference type="CDD" id="cd01716">
    <property type="entry name" value="Hfq"/>
    <property type="match status" value="1"/>
</dbReference>
<dbReference type="FunFam" id="2.30.30.100:FF:000012">
    <property type="entry name" value="RNA-binding protein Hfq"/>
    <property type="match status" value="1"/>
</dbReference>
<dbReference type="Gene3D" id="2.30.30.100">
    <property type="match status" value="1"/>
</dbReference>
<dbReference type="HAMAP" id="MF_00436">
    <property type="entry name" value="Hfq"/>
    <property type="match status" value="1"/>
</dbReference>
<dbReference type="InterPro" id="IPR005001">
    <property type="entry name" value="Hfq"/>
</dbReference>
<dbReference type="InterPro" id="IPR010920">
    <property type="entry name" value="LSM_dom_sf"/>
</dbReference>
<dbReference type="InterPro" id="IPR047575">
    <property type="entry name" value="Sm"/>
</dbReference>
<dbReference type="NCBIfam" id="TIGR02383">
    <property type="entry name" value="Hfq"/>
    <property type="match status" value="1"/>
</dbReference>
<dbReference type="NCBIfam" id="NF001602">
    <property type="entry name" value="PRK00395.1"/>
    <property type="match status" value="1"/>
</dbReference>
<dbReference type="PANTHER" id="PTHR34772">
    <property type="entry name" value="RNA-BINDING PROTEIN HFQ"/>
    <property type="match status" value="1"/>
</dbReference>
<dbReference type="PANTHER" id="PTHR34772:SF1">
    <property type="entry name" value="RNA-BINDING PROTEIN HFQ"/>
    <property type="match status" value="1"/>
</dbReference>
<dbReference type="Pfam" id="PF17209">
    <property type="entry name" value="Hfq"/>
    <property type="match status" value="1"/>
</dbReference>
<dbReference type="SUPFAM" id="SSF50182">
    <property type="entry name" value="Sm-like ribonucleoproteins"/>
    <property type="match status" value="1"/>
</dbReference>
<dbReference type="PROSITE" id="PS52002">
    <property type="entry name" value="SM"/>
    <property type="match status" value="1"/>
</dbReference>
<accession>C0ZEY6</accession>
<name>HFQ_BREBN</name>